<accession>Q6LT40</accession>
<keyword id="KW-0456">Lyase</keyword>
<keyword id="KW-0501">Molybdenum cofactor biosynthesis</keyword>
<keyword id="KW-1185">Reference proteome</keyword>
<feature type="chain" id="PRO_1000054116" description="Cyclic pyranopterin monophosphate synthase">
    <location>
        <begin position="1"/>
        <end position="165"/>
    </location>
</feature>
<feature type="active site" evidence="1">
    <location>
        <position position="134"/>
    </location>
</feature>
<feature type="binding site" evidence="1">
    <location>
        <begin position="76"/>
        <end position="78"/>
    </location>
    <ligand>
        <name>substrate</name>
    </ligand>
</feature>
<feature type="binding site" evidence="1">
    <location>
        <begin position="119"/>
        <end position="120"/>
    </location>
    <ligand>
        <name>substrate</name>
    </ligand>
</feature>
<sequence length="165" mass="17761">MMNQLTHINASGEANMVDVSAKAETVREARAEAFVHMAPETLELIVSGQNHKGDVFATARIAGIQAAKKTWDLIPLCHPLLLSKVEVQLEAIPAANENETNMVRIESCCKLAGKTGVEMEALTAASVAALTIYDMCKAVQKDMVISQVRLLEKTGGKSGHFKVEA</sequence>
<organism>
    <name type="scientific">Photobacterium profundum (strain SS9)</name>
    <dbReference type="NCBI Taxonomy" id="298386"/>
    <lineage>
        <taxon>Bacteria</taxon>
        <taxon>Pseudomonadati</taxon>
        <taxon>Pseudomonadota</taxon>
        <taxon>Gammaproteobacteria</taxon>
        <taxon>Vibrionales</taxon>
        <taxon>Vibrionaceae</taxon>
        <taxon>Photobacterium</taxon>
    </lineage>
</organism>
<evidence type="ECO:0000255" key="1">
    <source>
        <dbReference type="HAMAP-Rule" id="MF_01224"/>
    </source>
</evidence>
<name>MOAC_PHOPR</name>
<dbReference type="EC" id="4.6.1.17" evidence="1"/>
<dbReference type="EMBL" id="CR378666">
    <property type="protein sequence ID" value="CAG19536.1"/>
    <property type="molecule type" value="Genomic_DNA"/>
</dbReference>
<dbReference type="SMR" id="Q6LT40"/>
<dbReference type="STRING" id="298386.PBPRA1125"/>
<dbReference type="KEGG" id="ppr:PBPRA1125"/>
<dbReference type="eggNOG" id="COG0315">
    <property type="taxonomic scope" value="Bacteria"/>
</dbReference>
<dbReference type="HOGENOM" id="CLU_074693_1_1_6"/>
<dbReference type="UniPathway" id="UPA00344"/>
<dbReference type="Proteomes" id="UP000000593">
    <property type="component" value="Chromosome 1"/>
</dbReference>
<dbReference type="GO" id="GO:0061799">
    <property type="term" value="F:cyclic pyranopterin monophosphate synthase activity"/>
    <property type="evidence" value="ECO:0007669"/>
    <property type="project" value="UniProtKB-UniRule"/>
</dbReference>
<dbReference type="GO" id="GO:0061798">
    <property type="term" value="F:GTP 3',8'-cyclase activity"/>
    <property type="evidence" value="ECO:0007669"/>
    <property type="project" value="TreeGrafter"/>
</dbReference>
<dbReference type="GO" id="GO:0006777">
    <property type="term" value="P:Mo-molybdopterin cofactor biosynthetic process"/>
    <property type="evidence" value="ECO:0007669"/>
    <property type="project" value="UniProtKB-UniRule"/>
</dbReference>
<dbReference type="CDD" id="cd01420">
    <property type="entry name" value="MoaC_PE"/>
    <property type="match status" value="1"/>
</dbReference>
<dbReference type="FunFam" id="3.30.70.640:FF:000001">
    <property type="entry name" value="Cyclic pyranopterin monophosphate synthase"/>
    <property type="match status" value="1"/>
</dbReference>
<dbReference type="Gene3D" id="3.30.70.640">
    <property type="entry name" value="Molybdopterin cofactor biosynthesis C (MoaC) domain"/>
    <property type="match status" value="1"/>
</dbReference>
<dbReference type="HAMAP" id="MF_01224_B">
    <property type="entry name" value="MoaC_B"/>
    <property type="match status" value="1"/>
</dbReference>
<dbReference type="InterPro" id="IPR023045">
    <property type="entry name" value="MoaC"/>
</dbReference>
<dbReference type="InterPro" id="IPR047594">
    <property type="entry name" value="MoaC_bact/euk"/>
</dbReference>
<dbReference type="InterPro" id="IPR036522">
    <property type="entry name" value="MoaC_sf"/>
</dbReference>
<dbReference type="InterPro" id="IPR050105">
    <property type="entry name" value="MoCo_biosynth_MoaA/MoaC"/>
</dbReference>
<dbReference type="InterPro" id="IPR002820">
    <property type="entry name" value="Mopterin_CF_biosynth-C_dom"/>
</dbReference>
<dbReference type="NCBIfam" id="TIGR00581">
    <property type="entry name" value="moaC"/>
    <property type="match status" value="1"/>
</dbReference>
<dbReference type="NCBIfam" id="NF006870">
    <property type="entry name" value="PRK09364.1"/>
    <property type="match status" value="1"/>
</dbReference>
<dbReference type="PANTHER" id="PTHR22960:SF0">
    <property type="entry name" value="MOLYBDENUM COFACTOR BIOSYNTHESIS PROTEIN 1"/>
    <property type="match status" value="1"/>
</dbReference>
<dbReference type="PANTHER" id="PTHR22960">
    <property type="entry name" value="MOLYBDOPTERIN COFACTOR SYNTHESIS PROTEIN A"/>
    <property type="match status" value="1"/>
</dbReference>
<dbReference type="Pfam" id="PF01967">
    <property type="entry name" value="MoaC"/>
    <property type="match status" value="1"/>
</dbReference>
<dbReference type="SUPFAM" id="SSF55040">
    <property type="entry name" value="Molybdenum cofactor biosynthesis protein C, MoaC"/>
    <property type="match status" value="1"/>
</dbReference>
<protein>
    <recommendedName>
        <fullName evidence="1">Cyclic pyranopterin monophosphate synthase</fullName>
        <ecNumber evidence="1">4.6.1.17</ecNumber>
    </recommendedName>
    <alternativeName>
        <fullName evidence="1">Molybdenum cofactor biosynthesis protein C</fullName>
    </alternativeName>
</protein>
<reference key="1">
    <citation type="journal article" date="2005" name="Science">
        <title>Life at depth: Photobacterium profundum genome sequence and expression analysis.</title>
        <authorList>
            <person name="Vezzi A."/>
            <person name="Campanaro S."/>
            <person name="D'Angelo M."/>
            <person name="Simonato F."/>
            <person name="Vitulo N."/>
            <person name="Lauro F.M."/>
            <person name="Cestaro A."/>
            <person name="Malacrida G."/>
            <person name="Simionati B."/>
            <person name="Cannata N."/>
            <person name="Romualdi C."/>
            <person name="Bartlett D.H."/>
            <person name="Valle G."/>
        </authorList>
    </citation>
    <scope>NUCLEOTIDE SEQUENCE [LARGE SCALE GENOMIC DNA]</scope>
    <source>
        <strain>ATCC BAA-1253 / SS9</strain>
    </source>
</reference>
<proteinExistence type="inferred from homology"/>
<comment type="function">
    <text evidence="1">Catalyzes the conversion of (8S)-3',8-cyclo-7,8-dihydroguanosine 5'-triphosphate to cyclic pyranopterin monophosphate (cPMP).</text>
</comment>
<comment type="catalytic activity">
    <reaction evidence="1">
        <text>(8S)-3',8-cyclo-7,8-dihydroguanosine 5'-triphosphate = cyclic pyranopterin phosphate + diphosphate</text>
        <dbReference type="Rhea" id="RHEA:49580"/>
        <dbReference type="ChEBI" id="CHEBI:33019"/>
        <dbReference type="ChEBI" id="CHEBI:59648"/>
        <dbReference type="ChEBI" id="CHEBI:131766"/>
        <dbReference type="EC" id="4.6.1.17"/>
    </reaction>
</comment>
<comment type="pathway">
    <text evidence="1">Cofactor biosynthesis; molybdopterin biosynthesis.</text>
</comment>
<comment type="subunit">
    <text evidence="1">Homohexamer; trimer of dimers.</text>
</comment>
<comment type="similarity">
    <text evidence="1">Belongs to the MoaC family.</text>
</comment>
<gene>
    <name evidence="1" type="primary">moaC</name>
    <name type="ordered locus">PBPRA1125</name>
</gene>